<accession>B8EBR4</accession>
<sequence length="389" mass="40834">MEKAIRNFLSQESAGGILLLVAVALAMLMANSPLSGLYQGFLGTDVQVKIGELDIHKPLILWINDGLMAVFFLLIGLEVKRELLEGALSSVAQASLPTFAAIGGMLVPAGVYLLFNYGDPVTQAGWAIPAATDIAFALGIMALLGSRVPVSLKVFLLALAIIDDLGVIVIIALFYSTDLSTISLVIASLAIAGLVGLNRKGVTSLLPYGILGLILWVAVLKSGVHATLAGVIIAFCIPLRAKDGSSPSEGLEHSLHPWSTFFILPVFAFANAGVYVGNMNLETLISPVPVGIALGLMLGKPIGVMVFSYIAVKLKLAQLPDGVGWKQIAPVAAMCGIGFTMSMFIASLAFEHADPMYGDLARLGTLIGSIMAALVGYFWLSKVLPNKGV</sequence>
<reference key="1">
    <citation type="submission" date="2008-12" db="EMBL/GenBank/DDBJ databases">
        <title>Complete sequence of chromosome of Shewanella baltica OS223.</title>
        <authorList>
            <consortium name="US DOE Joint Genome Institute"/>
            <person name="Lucas S."/>
            <person name="Copeland A."/>
            <person name="Lapidus A."/>
            <person name="Glavina del Rio T."/>
            <person name="Dalin E."/>
            <person name="Tice H."/>
            <person name="Bruce D."/>
            <person name="Goodwin L."/>
            <person name="Pitluck S."/>
            <person name="Chertkov O."/>
            <person name="Meincke L."/>
            <person name="Brettin T."/>
            <person name="Detter J.C."/>
            <person name="Han C."/>
            <person name="Kuske C.R."/>
            <person name="Larimer F."/>
            <person name="Land M."/>
            <person name="Hauser L."/>
            <person name="Kyrpides N."/>
            <person name="Ovchinnikova G."/>
            <person name="Brettar I."/>
            <person name="Rodrigues J."/>
            <person name="Konstantinidis K."/>
            <person name="Tiedje J."/>
        </authorList>
    </citation>
    <scope>NUCLEOTIDE SEQUENCE [LARGE SCALE GENOMIC DNA]</scope>
    <source>
        <strain>OS223</strain>
    </source>
</reference>
<feature type="chain" id="PRO_1000188441" description="Na(+)/H(+) antiporter NhaA">
    <location>
        <begin position="1"/>
        <end position="389"/>
    </location>
</feature>
<feature type="transmembrane region" description="Helical" evidence="1">
    <location>
        <begin position="14"/>
        <end position="34"/>
    </location>
</feature>
<feature type="transmembrane region" description="Helical" evidence="1">
    <location>
        <begin position="59"/>
        <end position="79"/>
    </location>
</feature>
<feature type="transmembrane region" description="Helical" evidence="1">
    <location>
        <begin position="95"/>
        <end position="115"/>
    </location>
</feature>
<feature type="transmembrane region" description="Helical" evidence="1">
    <location>
        <begin position="124"/>
        <end position="144"/>
    </location>
</feature>
<feature type="transmembrane region" description="Helical" evidence="1">
    <location>
        <begin position="154"/>
        <end position="174"/>
    </location>
</feature>
<feature type="transmembrane region" description="Helical" evidence="1">
    <location>
        <begin position="177"/>
        <end position="197"/>
    </location>
</feature>
<feature type="transmembrane region" description="Helical" evidence="1">
    <location>
        <begin position="213"/>
        <end position="233"/>
    </location>
</feature>
<feature type="transmembrane region" description="Helical" evidence="1">
    <location>
        <begin position="257"/>
        <end position="277"/>
    </location>
</feature>
<feature type="transmembrane region" description="Helical" evidence="1">
    <location>
        <begin position="292"/>
        <end position="312"/>
    </location>
</feature>
<feature type="transmembrane region" description="Helical" evidence="1">
    <location>
        <begin position="328"/>
        <end position="348"/>
    </location>
</feature>
<feature type="transmembrane region" description="Helical" evidence="1">
    <location>
        <begin position="363"/>
        <end position="383"/>
    </location>
</feature>
<keyword id="KW-0050">Antiport</keyword>
<keyword id="KW-0997">Cell inner membrane</keyword>
<keyword id="KW-1003">Cell membrane</keyword>
<keyword id="KW-0406">Ion transport</keyword>
<keyword id="KW-0472">Membrane</keyword>
<keyword id="KW-0915">Sodium</keyword>
<keyword id="KW-0739">Sodium transport</keyword>
<keyword id="KW-0812">Transmembrane</keyword>
<keyword id="KW-1133">Transmembrane helix</keyword>
<keyword id="KW-0813">Transport</keyword>
<organism>
    <name type="scientific">Shewanella baltica (strain OS223)</name>
    <dbReference type="NCBI Taxonomy" id="407976"/>
    <lineage>
        <taxon>Bacteria</taxon>
        <taxon>Pseudomonadati</taxon>
        <taxon>Pseudomonadota</taxon>
        <taxon>Gammaproteobacteria</taxon>
        <taxon>Alteromonadales</taxon>
        <taxon>Shewanellaceae</taxon>
        <taxon>Shewanella</taxon>
    </lineage>
</organism>
<gene>
    <name evidence="1" type="primary">nhaA</name>
    <name type="ordered locus">Sbal223_3124</name>
</gene>
<protein>
    <recommendedName>
        <fullName evidence="1">Na(+)/H(+) antiporter NhaA</fullName>
    </recommendedName>
    <alternativeName>
        <fullName evidence="1">Sodium/proton antiporter NhaA</fullName>
    </alternativeName>
</protein>
<evidence type="ECO:0000255" key="1">
    <source>
        <dbReference type="HAMAP-Rule" id="MF_01844"/>
    </source>
</evidence>
<dbReference type="EMBL" id="CP001252">
    <property type="protein sequence ID" value="ACK47609.1"/>
    <property type="molecule type" value="Genomic_DNA"/>
</dbReference>
<dbReference type="RefSeq" id="WP_006080767.1">
    <property type="nucleotide sequence ID" value="NC_011663.1"/>
</dbReference>
<dbReference type="SMR" id="B8EBR4"/>
<dbReference type="KEGG" id="sbp:Sbal223_3124"/>
<dbReference type="HOGENOM" id="CLU_015803_1_0_6"/>
<dbReference type="Proteomes" id="UP000002507">
    <property type="component" value="Chromosome"/>
</dbReference>
<dbReference type="GO" id="GO:0005886">
    <property type="term" value="C:plasma membrane"/>
    <property type="evidence" value="ECO:0007669"/>
    <property type="project" value="UniProtKB-SubCell"/>
</dbReference>
<dbReference type="GO" id="GO:0015385">
    <property type="term" value="F:sodium:proton antiporter activity"/>
    <property type="evidence" value="ECO:0007669"/>
    <property type="project" value="TreeGrafter"/>
</dbReference>
<dbReference type="GO" id="GO:0006885">
    <property type="term" value="P:regulation of pH"/>
    <property type="evidence" value="ECO:0007669"/>
    <property type="project" value="InterPro"/>
</dbReference>
<dbReference type="Gene3D" id="1.20.1530.10">
    <property type="entry name" value="Na+/H+ antiporter like domain"/>
    <property type="match status" value="1"/>
</dbReference>
<dbReference type="HAMAP" id="MF_01844">
    <property type="entry name" value="NhaA"/>
    <property type="match status" value="1"/>
</dbReference>
<dbReference type="InterPro" id="IPR023171">
    <property type="entry name" value="Na/H_antiporter_dom_sf"/>
</dbReference>
<dbReference type="InterPro" id="IPR004670">
    <property type="entry name" value="NhaA"/>
</dbReference>
<dbReference type="NCBIfam" id="TIGR00773">
    <property type="entry name" value="NhaA"/>
    <property type="match status" value="1"/>
</dbReference>
<dbReference type="NCBIfam" id="NF007111">
    <property type="entry name" value="PRK09560.1"/>
    <property type="match status" value="1"/>
</dbReference>
<dbReference type="NCBIfam" id="NF007112">
    <property type="entry name" value="PRK09561.1"/>
    <property type="match status" value="1"/>
</dbReference>
<dbReference type="PANTHER" id="PTHR30341:SF0">
    <property type="entry name" value="NA(+)_H(+) ANTIPORTER NHAA"/>
    <property type="match status" value="1"/>
</dbReference>
<dbReference type="PANTHER" id="PTHR30341">
    <property type="entry name" value="SODIUM ION/PROTON ANTIPORTER NHAA-RELATED"/>
    <property type="match status" value="1"/>
</dbReference>
<dbReference type="Pfam" id="PF06965">
    <property type="entry name" value="Na_H_antiport_1"/>
    <property type="match status" value="1"/>
</dbReference>
<name>NHAA_SHEB2</name>
<proteinExistence type="inferred from homology"/>
<comment type="function">
    <text evidence="1">Na(+)/H(+) antiporter that extrudes sodium in exchange for external protons.</text>
</comment>
<comment type="catalytic activity">
    <reaction evidence="1">
        <text>Na(+)(in) + 2 H(+)(out) = Na(+)(out) + 2 H(+)(in)</text>
        <dbReference type="Rhea" id="RHEA:29251"/>
        <dbReference type="ChEBI" id="CHEBI:15378"/>
        <dbReference type="ChEBI" id="CHEBI:29101"/>
    </reaction>
    <physiologicalReaction direction="left-to-right" evidence="1">
        <dbReference type="Rhea" id="RHEA:29252"/>
    </physiologicalReaction>
</comment>
<comment type="subcellular location">
    <subcellularLocation>
        <location evidence="1">Cell inner membrane</location>
        <topology evidence="1">Multi-pass membrane protein</topology>
    </subcellularLocation>
</comment>
<comment type="similarity">
    <text evidence="1">Belongs to the NhaA Na(+)/H(+) (TC 2.A.33) antiporter family.</text>
</comment>